<proteinExistence type="inferred from homology"/>
<reference key="1">
    <citation type="journal article" date="2005" name="Nature">
        <title>The genome of the social amoeba Dictyostelium discoideum.</title>
        <authorList>
            <person name="Eichinger L."/>
            <person name="Pachebat J.A."/>
            <person name="Gloeckner G."/>
            <person name="Rajandream M.A."/>
            <person name="Sucgang R."/>
            <person name="Berriman M."/>
            <person name="Song J."/>
            <person name="Olsen R."/>
            <person name="Szafranski K."/>
            <person name="Xu Q."/>
            <person name="Tunggal B."/>
            <person name="Kummerfeld S."/>
            <person name="Madera M."/>
            <person name="Konfortov B.A."/>
            <person name="Rivero F."/>
            <person name="Bankier A.T."/>
            <person name="Lehmann R."/>
            <person name="Hamlin N."/>
            <person name="Davies R."/>
            <person name="Gaudet P."/>
            <person name="Fey P."/>
            <person name="Pilcher K."/>
            <person name="Chen G."/>
            <person name="Saunders D."/>
            <person name="Sodergren E.J."/>
            <person name="Davis P."/>
            <person name="Kerhornou A."/>
            <person name="Nie X."/>
            <person name="Hall N."/>
            <person name="Anjard C."/>
            <person name="Hemphill L."/>
            <person name="Bason N."/>
            <person name="Farbrother P."/>
            <person name="Desany B."/>
            <person name="Just E."/>
            <person name="Morio T."/>
            <person name="Rost R."/>
            <person name="Churcher C.M."/>
            <person name="Cooper J."/>
            <person name="Haydock S."/>
            <person name="van Driessche N."/>
            <person name="Cronin A."/>
            <person name="Goodhead I."/>
            <person name="Muzny D.M."/>
            <person name="Mourier T."/>
            <person name="Pain A."/>
            <person name="Lu M."/>
            <person name="Harper D."/>
            <person name="Lindsay R."/>
            <person name="Hauser H."/>
            <person name="James K.D."/>
            <person name="Quiles M."/>
            <person name="Madan Babu M."/>
            <person name="Saito T."/>
            <person name="Buchrieser C."/>
            <person name="Wardroper A."/>
            <person name="Felder M."/>
            <person name="Thangavelu M."/>
            <person name="Johnson D."/>
            <person name="Knights A."/>
            <person name="Loulseged H."/>
            <person name="Mungall K.L."/>
            <person name="Oliver K."/>
            <person name="Price C."/>
            <person name="Quail M.A."/>
            <person name="Urushihara H."/>
            <person name="Hernandez J."/>
            <person name="Rabbinowitsch E."/>
            <person name="Steffen D."/>
            <person name="Sanders M."/>
            <person name="Ma J."/>
            <person name="Kohara Y."/>
            <person name="Sharp S."/>
            <person name="Simmonds M.N."/>
            <person name="Spiegler S."/>
            <person name="Tivey A."/>
            <person name="Sugano S."/>
            <person name="White B."/>
            <person name="Walker D."/>
            <person name="Woodward J.R."/>
            <person name="Winckler T."/>
            <person name="Tanaka Y."/>
            <person name="Shaulsky G."/>
            <person name="Schleicher M."/>
            <person name="Weinstock G.M."/>
            <person name="Rosenthal A."/>
            <person name="Cox E.C."/>
            <person name="Chisholm R.L."/>
            <person name="Gibbs R.A."/>
            <person name="Loomis W.F."/>
            <person name="Platzer M."/>
            <person name="Kay R.R."/>
            <person name="Williams J.G."/>
            <person name="Dear P.H."/>
            <person name="Noegel A.A."/>
            <person name="Barrell B.G."/>
            <person name="Kuspa A."/>
        </authorList>
    </citation>
    <scope>NUCLEOTIDE SEQUENCE [LARGE SCALE GENOMIC DNA]</scope>
    <source>
        <strain>AX4</strain>
    </source>
</reference>
<name>GACJJ_DICDI</name>
<organism>
    <name type="scientific">Dictyostelium discoideum</name>
    <name type="common">Social amoeba</name>
    <dbReference type="NCBI Taxonomy" id="44689"/>
    <lineage>
        <taxon>Eukaryota</taxon>
        <taxon>Amoebozoa</taxon>
        <taxon>Evosea</taxon>
        <taxon>Eumycetozoa</taxon>
        <taxon>Dictyostelia</taxon>
        <taxon>Dictyosteliales</taxon>
        <taxon>Dictyosteliaceae</taxon>
        <taxon>Dictyostelium</taxon>
    </lineage>
</organism>
<protein>
    <recommendedName>
        <fullName>Rho GTPase-activating protein gacJJ</fullName>
    </recommendedName>
    <alternativeName>
        <fullName>GTPase activating factor for raC protein JJ</fullName>
    </alternativeName>
</protein>
<keyword id="KW-0175">Coiled coil</keyword>
<keyword id="KW-0963">Cytoplasm</keyword>
<keyword id="KW-0343">GTPase activation</keyword>
<keyword id="KW-1185">Reference proteome</keyword>
<keyword id="KW-0728">SH3 domain</keyword>
<feature type="chain" id="PRO_0000380208" description="Rho GTPase-activating protein gacJJ">
    <location>
        <begin position="1"/>
        <end position="873"/>
    </location>
</feature>
<feature type="domain" description="PH" evidence="3">
    <location>
        <begin position="301"/>
        <end position="402"/>
    </location>
</feature>
<feature type="domain" description="Rho-GAP" evidence="4">
    <location>
        <begin position="428"/>
        <end position="621"/>
    </location>
</feature>
<feature type="domain" description="SH3" evidence="5">
    <location>
        <begin position="628"/>
        <end position="694"/>
    </location>
</feature>
<feature type="region of interest" description="Disordered" evidence="6">
    <location>
        <begin position="64"/>
        <end position="147"/>
    </location>
</feature>
<feature type="coiled-coil region" evidence="2">
    <location>
        <begin position="715"/>
        <end position="761"/>
    </location>
</feature>
<feature type="compositionally biased region" description="Low complexity" evidence="6">
    <location>
        <begin position="66"/>
        <end position="91"/>
    </location>
</feature>
<feature type="compositionally biased region" description="Gly residues" evidence="6">
    <location>
        <begin position="103"/>
        <end position="112"/>
    </location>
</feature>
<feature type="compositionally biased region" description="Low complexity" evidence="6">
    <location>
        <begin position="113"/>
        <end position="144"/>
    </location>
</feature>
<feature type="site" description="Arginine finger; crucial for GTP hydrolysis by stabilizing the transition state" evidence="4">
    <location>
        <position position="463"/>
    </location>
</feature>
<evidence type="ECO:0000250" key="1"/>
<evidence type="ECO:0000255" key="2"/>
<evidence type="ECO:0000255" key="3">
    <source>
        <dbReference type="PROSITE-ProRule" id="PRU00145"/>
    </source>
</evidence>
<evidence type="ECO:0000255" key="4">
    <source>
        <dbReference type="PROSITE-ProRule" id="PRU00172"/>
    </source>
</evidence>
<evidence type="ECO:0000255" key="5">
    <source>
        <dbReference type="PROSITE-ProRule" id="PRU00192"/>
    </source>
</evidence>
<evidence type="ECO:0000256" key="6">
    <source>
        <dbReference type="SAM" id="MobiDB-lite"/>
    </source>
</evidence>
<dbReference type="EMBL" id="AAFI02000171">
    <property type="protein sequence ID" value="EAL62001.1"/>
    <property type="molecule type" value="Genomic_DNA"/>
</dbReference>
<dbReference type="RefSeq" id="XP_635506.1">
    <property type="nucleotide sequence ID" value="XM_630414.1"/>
</dbReference>
<dbReference type="SMR" id="Q54FG5"/>
<dbReference type="FunCoup" id="Q54FG5">
    <property type="interactions" value="127"/>
</dbReference>
<dbReference type="STRING" id="44689.Q54FG5"/>
<dbReference type="PaxDb" id="44689-DDB0233754"/>
<dbReference type="EnsemblProtists" id="EAL62001">
    <property type="protein sequence ID" value="EAL62001"/>
    <property type="gene ID" value="DDB_G0290873"/>
</dbReference>
<dbReference type="GeneID" id="8627873"/>
<dbReference type="KEGG" id="ddi:DDB_G0290873"/>
<dbReference type="dictyBase" id="DDB_G0290873">
    <property type="gene designation" value="gacJJ"/>
</dbReference>
<dbReference type="VEuPathDB" id="AmoebaDB:DDB_G0290873"/>
<dbReference type="eggNOG" id="KOG4270">
    <property type="taxonomic scope" value="Eukaryota"/>
</dbReference>
<dbReference type="HOGENOM" id="CLU_329137_0_0_1"/>
<dbReference type="InParanoid" id="Q54FG5"/>
<dbReference type="OMA" id="GWWTGEY"/>
<dbReference type="Reactome" id="R-DDI-6798695">
    <property type="pathway name" value="Neutrophil degranulation"/>
</dbReference>
<dbReference type="Reactome" id="R-DDI-9013148">
    <property type="pathway name" value="CDC42 GTPase cycle"/>
</dbReference>
<dbReference type="Reactome" id="R-DDI-9013149">
    <property type="pathway name" value="RAC1 GTPase cycle"/>
</dbReference>
<dbReference type="Reactome" id="R-DDI-9013423">
    <property type="pathway name" value="RAC3 GTPase cycle"/>
</dbReference>
<dbReference type="Reactome" id="R-DDI-9013424">
    <property type="pathway name" value="RHOV GTPase cycle"/>
</dbReference>
<dbReference type="PRO" id="PR:Q54FG5"/>
<dbReference type="Proteomes" id="UP000002195">
    <property type="component" value="Chromosome 5"/>
</dbReference>
<dbReference type="GO" id="GO:0005737">
    <property type="term" value="C:cytoplasm"/>
    <property type="evidence" value="ECO:0000318"/>
    <property type="project" value="GO_Central"/>
</dbReference>
<dbReference type="GO" id="GO:0005886">
    <property type="term" value="C:plasma membrane"/>
    <property type="evidence" value="ECO:0000318"/>
    <property type="project" value="GO_Central"/>
</dbReference>
<dbReference type="GO" id="GO:0005096">
    <property type="term" value="F:GTPase activator activity"/>
    <property type="evidence" value="ECO:0000318"/>
    <property type="project" value="GO_Central"/>
</dbReference>
<dbReference type="GO" id="GO:0022607">
    <property type="term" value="P:cellular component assembly"/>
    <property type="evidence" value="ECO:0007669"/>
    <property type="project" value="UniProtKB-ARBA"/>
</dbReference>
<dbReference type="GO" id="GO:0007264">
    <property type="term" value="P:small GTPase-mediated signal transduction"/>
    <property type="evidence" value="ECO:0000318"/>
    <property type="project" value="GO_Central"/>
</dbReference>
<dbReference type="CDD" id="cd00159">
    <property type="entry name" value="RhoGAP"/>
    <property type="match status" value="1"/>
</dbReference>
<dbReference type="Gene3D" id="2.30.29.30">
    <property type="entry name" value="Pleckstrin-homology domain (PH domain)/Phosphotyrosine-binding domain (PTB)"/>
    <property type="match status" value="1"/>
</dbReference>
<dbReference type="Gene3D" id="1.10.555.10">
    <property type="entry name" value="Rho GTPase activation protein"/>
    <property type="match status" value="1"/>
</dbReference>
<dbReference type="Gene3D" id="2.30.30.40">
    <property type="entry name" value="SH3 Domains"/>
    <property type="match status" value="1"/>
</dbReference>
<dbReference type="InterPro" id="IPR011993">
    <property type="entry name" value="PH-like_dom_sf"/>
</dbReference>
<dbReference type="InterPro" id="IPR001849">
    <property type="entry name" value="PH_domain"/>
</dbReference>
<dbReference type="InterPro" id="IPR050729">
    <property type="entry name" value="Rho-GAP"/>
</dbReference>
<dbReference type="InterPro" id="IPR008936">
    <property type="entry name" value="Rho_GTPase_activation_prot"/>
</dbReference>
<dbReference type="InterPro" id="IPR000198">
    <property type="entry name" value="RhoGAP_dom"/>
</dbReference>
<dbReference type="InterPro" id="IPR036028">
    <property type="entry name" value="SH3-like_dom_sf"/>
</dbReference>
<dbReference type="InterPro" id="IPR001452">
    <property type="entry name" value="SH3_domain"/>
</dbReference>
<dbReference type="PANTHER" id="PTHR23176:SF129">
    <property type="entry name" value="RHO GTPASE ACTIVATING PROTEIN AT 16F, ISOFORM E-RELATED"/>
    <property type="match status" value="1"/>
</dbReference>
<dbReference type="PANTHER" id="PTHR23176">
    <property type="entry name" value="RHO/RAC/CDC GTPASE-ACTIVATING PROTEIN"/>
    <property type="match status" value="1"/>
</dbReference>
<dbReference type="Pfam" id="PF00169">
    <property type="entry name" value="PH"/>
    <property type="match status" value="1"/>
</dbReference>
<dbReference type="Pfam" id="PF00620">
    <property type="entry name" value="RhoGAP"/>
    <property type="match status" value="1"/>
</dbReference>
<dbReference type="Pfam" id="PF14604">
    <property type="entry name" value="SH3_9"/>
    <property type="match status" value="1"/>
</dbReference>
<dbReference type="SMART" id="SM00233">
    <property type="entry name" value="PH"/>
    <property type="match status" value="1"/>
</dbReference>
<dbReference type="SMART" id="SM00324">
    <property type="entry name" value="RhoGAP"/>
    <property type="match status" value="1"/>
</dbReference>
<dbReference type="SMART" id="SM00326">
    <property type="entry name" value="SH3"/>
    <property type="match status" value="1"/>
</dbReference>
<dbReference type="SUPFAM" id="SSF48350">
    <property type="entry name" value="GTPase activation domain, GAP"/>
    <property type="match status" value="1"/>
</dbReference>
<dbReference type="SUPFAM" id="SSF50729">
    <property type="entry name" value="PH domain-like"/>
    <property type="match status" value="1"/>
</dbReference>
<dbReference type="SUPFAM" id="SSF50044">
    <property type="entry name" value="SH3-domain"/>
    <property type="match status" value="1"/>
</dbReference>
<dbReference type="PROSITE" id="PS50003">
    <property type="entry name" value="PH_DOMAIN"/>
    <property type="match status" value="1"/>
</dbReference>
<dbReference type="PROSITE" id="PS50238">
    <property type="entry name" value="RHOGAP"/>
    <property type="match status" value="1"/>
</dbReference>
<dbReference type="PROSITE" id="PS50002">
    <property type="entry name" value="SH3"/>
    <property type="match status" value="1"/>
</dbReference>
<sequence>MAAPSSNYQLYGLKIGFPPGGLMRNKQMKFNDYGITVKEAIQIITNKQGMQNPDSYTLQITYSDEPSSINTSSGNIGSNNNSSSNTPLTGSLGMGPPPPSASIGGGGGGGDNGITNSGNIGSSSNSDLKKSTSSGIVNVNNSSNAPTRRLKWMDDNEKLISYPLGAHDVVIELKKKYQLIKVYDGKQTMNLIVDITKPLSDLMDLVSCKFKLRSTSDCKLFTYGKEINLNSNIKNLNIDTSLPFILRDNNDPNSLSLESIQWDNGNGFFVGGNGGIGGIGSDDDADDINNNLSVPAKSIINPVREGYLKKQDKKKSWKTRYFKLTDKYLYWYKSPTAIKASGMIICKDYHIKLAPSTHSKEVKLEFTPKHMIAGATTIIHYIKFENEQELKQWTVLPIVIESSNDSGSNNSNTSGGNQSMIGKKVFGVPIEKTVSGNNEIPAVVLQTIDYIEKKAMDIVGIFRLSGSVLTIEQWKAKYDKGEKVDLFQEVDPHAVAGLLKLYLRELPDPLLTYEKYDNFIAAQSIDDFPSRIKLIKHLVKSLPPVNYAVLSYLMAFVGKVATHSAANKMQVHNLSTVFGPNLIKDRQDSGDYGNNVQVLVEDTPIINALALSLIRDYQYIFTDKEIPEQKILAKSLYEYAGNDDGTTSEDDKDLLFPKGATIKVTQQGTDGWWTGEYQGKQGKFPASYVELLPHSPSTLLRTKSNSNLTKKKKFMLEMESTKTKNQEIDKNIKQLEITKKELESTINDLENEKAALENDPTIKAMMNLLANAKTNKDIAMIPKNIDVLFQKFEEYKSSHEALATTKTTLIDEYEQFNNNPKKRLDTKEKEQIQQKYDNLSIIIDKSQKIRSKSINSKKIINDDLVELKKIFSL</sequence>
<comment type="function">
    <text evidence="1">Rho GTPase-activating protein involved in the signal transduction pathway.</text>
</comment>
<comment type="subcellular location">
    <subcellularLocation>
        <location evidence="1">Cytoplasm</location>
    </subcellularLocation>
</comment>
<accession>Q54FG5</accession>
<gene>
    <name type="primary">gacJJ</name>
    <name type="ORF">DDB_G0290873</name>
</gene>